<dbReference type="EC" id="2.7.1.16" evidence="1"/>
<dbReference type="EMBL" id="CP000886">
    <property type="protein sequence ID" value="ABX65573.1"/>
    <property type="molecule type" value="Genomic_DNA"/>
</dbReference>
<dbReference type="RefSeq" id="WP_000951813.1">
    <property type="nucleotide sequence ID" value="NC_010102.1"/>
</dbReference>
<dbReference type="SMR" id="A9MYN9"/>
<dbReference type="KEGG" id="spq:SPAB_00130"/>
<dbReference type="PATRIC" id="fig|1016998.12.peg.123"/>
<dbReference type="HOGENOM" id="CLU_009281_9_1_6"/>
<dbReference type="BioCyc" id="SENT1016998:SPAB_RS00510-MONOMER"/>
<dbReference type="UniPathway" id="UPA00145">
    <property type="reaction ID" value="UER00566"/>
</dbReference>
<dbReference type="Proteomes" id="UP000008556">
    <property type="component" value="Chromosome"/>
</dbReference>
<dbReference type="GO" id="GO:0005737">
    <property type="term" value="C:cytoplasm"/>
    <property type="evidence" value="ECO:0007669"/>
    <property type="project" value="TreeGrafter"/>
</dbReference>
<dbReference type="GO" id="GO:0005524">
    <property type="term" value="F:ATP binding"/>
    <property type="evidence" value="ECO:0007669"/>
    <property type="project" value="UniProtKB-KW"/>
</dbReference>
<dbReference type="GO" id="GO:0019150">
    <property type="term" value="F:D-ribulokinase activity"/>
    <property type="evidence" value="ECO:0007669"/>
    <property type="project" value="RHEA"/>
</dbReference>
<dbReference type="GO" id="GO:0008741">
    <property type="term" value="F:ribulokinase activity"/>
    <property type="evidence" value="ECO:0007669"/>
    <property type="project" value="UniProtKB-UniRule"/>
</dbReference>
<dbReference type="GO" id="GO:0019569">
    <property type="term" value="P:L-arabinose catabolic process to xylulose 5-phosphate"/>
    <property type="evidence" value="ECO:0007669"/>
    <property type="project" value="UniProtKB-UniRule"/>
</dbReference>
<dbReference type="CDD" id="cd07781">
    <property type="entry name" value="ASKHA_NBD_FGGY_L-RBK"/>
    <property type="match status" value="1"/>
</dbReference>
<dbReference type="Gene3D" id="1.20.58.2240">
    <property type="match status" value="1"/>
</dbReference>
<dbReference type="Gene3D" id="3.30.420.40">
    <property type="match status" value="1"/>
</dbReference>
<dbReference type="HAMAP" id="MF_00520">
    <property type="entry name" value="Ribulokinase"/>
    <property type="match status" value="1"/>
</dbReference>
<dbReference type="InterPro" id="IPR043129">
    <property type="entry name" value="ATPase_NBD"/>
</dbReference>
<dbReference type="InterPro" id="IPR018485">
    <property type="entry name" value="FGGY_C"/>
</dbReference>
<dbReference type="InterPro" id="IPR005929">
    <property type="entry name" value="Ribulokinase"/>
</dbReference>
<dbReference type="NCBIfam" id="TIGR01234">
    <property type="entry name" value="L-ribulokinase"/>
    <property type="match status" value="1"/>
</dbReference>
<dbReference type="NCBIfam" id="NF003154">
    <property type="entry name" value="PRK04123.1"/>
    <property type="match status" value="1"/>
</dbReference>
<dbReference type="PANTHER" id="PTHR43435:SF4">
    <property type="entry name" value="FGGY CARBOHYDRATE KINASE DOMAIN-CONTAINING PROTEIN"/>
    <property type="match status" value="1"/>
</dbReference>
<dbReference type="PANTHER" id="PTHR43435">
    <property type="entry name" value="RIBULOKINASE"/>
    <property type="match status" value="1"/>
</dbReference>
<dbReference type="Pfam" id="PF02782">
    <property type="entry name" value="FGGY_C"/>
    <property type="match status" value="1"/>
</dbReference>
<dbReference type="SUPFAM" id="SSF53067">
    <property type="entry name" value="Actin-like ATPase domain"/>
    <property type="match status" value="2"/>
</dbReference>
<gene>
    <name evidence="1" type="primary">araB</name>
    <name type="ordered locus">SPAB_00130</name>
</gene>
<evidence type="ECO:0000255" key="1">
    <source>
        <dbReference type="HAMAP-Rule" id="MF_00520"/>
    </source>
</evidence>
<comment type="catalytic activity">
    <reaction evidence="1">
        <text>D-ribulose + ATP = D-ribulose 5-phosphate + ADP + H(+)</text>
        <dbReference type="Rhea" id="RHEA:17601"/>
        <dbReference type="ChEBI" id="CHEBI:15378"/>
        <dbReference type="ChEBI" id="CHEBI:17173"/>
        <dbReference type="ChEBI" id="CHEBI:30616"/>
        <dbReference type="ChEBI" id="CHEBI:58121"/>
        <dbReference type="ChEBI" id="CHEBI:456216"/>
        <dbReference type="EC" id="2.7.1.16"/>
    </reaction>
</comment>
<comment type="catalytic activity">
    <reaction evidence="1">
        <text>L-ribulose + ATP = L-ribulose 5-phosphate + ADP + H(+)</text>
        <dbReference type="Rhea" id="RHEA:22072"/>
        <dbReference type="ChEBI" id="CHEBI:15378"/>
        <dbReference type="ChEBI" id="CHEBI:16880"/>
        <dbReference type="ChEBI" id="CHEBI:30616"/>
        <dbReference type="ChEBI" id="CHEBI:58226"/>
        <dbReference type="ChEBI" id="CHEBI:456216"/>
        <dbReference type="EC" id="2.7.1.16"/>
    </reaction>
</comment>
<comment type="pathway">
    <text evidence="1">Carbohydrate degradation; L-arabinose degradation via L-ribulose; D-xylulose 5-phosphate from L-arabinose (bacterial route): step 2/3.</text>
</comment>
<comment type="similarity">
    <text evidence="1">Belongs to the ribulokinase family.</text>
</comment>
<keyword id="KW-0054">Arabinose catabolism</keyword>
<keyword id="KW-0067">ATP-binding</keyword>
<keyword id="KW-0119">Carbohydrate metabolism</keyword>
<keyword id="KW-0418">Kinase</keyword>
<keyword id="KW-0547">Nucleotide-binding</keyword>
<keyword id="KW-0808">Transferase</keyword>
<reference key="1">
    <citation type="submission" date="2007-11" db="EMBL/GenBank/DDBJ databases">
        <authorList>
            <consortium name="The Salmonella enterica serovar Paratyphi B Genome Sequencing Project"/>
            <person name="McClelland M."/>
            <person name="Sanderson E.K."/>
            <person name="Porwollik S."/>
            <person name="Spieth J."/>
            <person name="Clifton W.S."/>
            <person name="Fulton R."/>
            <person name="Cordes M."/>
            <person name="Wollam A."/>
            <person name="Shah N."/>
            <person name="Pepin K."/>
            <person name="Bhonagiri V."/>
            <person name="Nash W."/>
            <person name="Johnson M."/>
            <person name="Thiruvilangam P."/>
            <person name="Wilson R."/>
        </authorList>
    </citation>
    <scope>NUCLEOTIDE SEQUENCE [LARGE SCALE GENOMIC DNA]</scope>
    <source>
        <strain>ATCC BAA-1250 / SPB7</strain>
    </source>
</reference>
<sequence length="569" mass="61746">MAIAIGLDFGSDSVRALAVDCATGDEIATSVEWYPRWQEGRYCDGPNNQFRHHPRDYMESMEAALKAVLAQLSAAQRANVVGIGVDSTGSTPAPIDADGNVLALRPEFAENPNAMFVLWKDHTAVEEADEITRLCHKPGKVDYSRYIGGIYSSEWFWAKILHVTRQDSAVAQAAVSWIELCDWVPALLSGTTRPQDIRRGRCSAGHKTLWHESWGGLPPASFFDELDPCINRHLRYPLFSETFTADLPVGTLCAEWAQRLDLPESVVISGGAFDCHMGAVGAGAQSNTLVKVIGTSTCDILIADKQSVGDRAVKGICGQVDGSVVPNFIGLEAGQSAFGDIYAWFSRVLSWPLEQLAAQHPELKTQINASQKQLLPALTDAWAKNPSLDHLPVVLDWFNGRRTPNANQRLKGVITDLNLATDAPALFGGLVASTAFGARAIQECFTDQGIAVNNVMALGGIARKNQVIMQVCCDVLNRPLQIVASDQCCALGAAIFAAVAAKVHADIPAAQQSMASAVERTLRPHPEQAQRFEQLYRRYQQWALSAEQHYLPTAAPAPTTPANQAILTH</sequence>
<protein>
    <recommendedName>
        <fullName evidence="1">Ribulokinase</fullName>
        <ecNumber evidence="1">2.7.1.16</ecNumber>
    </recommendedName>
</protein>
<name>ARAB_SALPB</name>
<feature type="chain" id="PRO_1000081682" description="Ribulokinase">
    <location>
        <begin position="1"/>
        <end position="569"/>
    </location>
</feature>
<accession>A9MYN9</accession>
<organism>
    <name type="scientific">Salmonella paratyphi B (strain ATCC BAA-1250 / SPB7)</name>
    <dbReference type="NCBI Taxonomy" id="1016998"/>
    <lineage>
        <taxon>Bacteria</taxon>
        <taxon>Pseudomonadati</taxon>
        <taxon>Pseudomonadota</taxon>
        <taxon>Gammaproteobacteria</taxon>
        <taxon>Enterobacterales</taxon>
        <taxon>Enterobacteriaceae</taxon>
        <taxon>Salmonella</taxon>
    </lineage>
</organism>
<proteinExistence type="inferred from homology"/>